<reference key="1">
    <citation type="journal article" date="2000" name="Nature">
        <title>Sequence and analysis of chromosome 1 of the plant Arabidopsis thaliana.</title>
        <authorList>
            <person name="Theologis A."/>
            <person name="Ecker J.R."/>
            <person name="Palm C.J."/>
            <person name="Federspiel N.A."/>
            <person name="Kaul S."/>
            <person name="White O."/>
            <person name="Alonso J."/>
            <person name="Altafi H."/>
            <person name="Araujo R."/>
            <person name="Bowman C.L."/>
            <person name="Brooks S.Y."/>
            <person name="Buehler E."/>
            <person name="Chan A."/>
            <person name="Chao Q."/>
            <person name="Chen H."/>
            <person name="Cheuk R.F."/>
            <person name="Chin C.W."/>
            <person name="Chung M.K."/>
            <person name="Conn L."/>
            <person name="Conway A.B."/>
            <person name="Conway A.R."/>
            <person name="Creasy T.H."/>
            <person name="Dewar K."/>
            <person name="Dunn P."/>
            <person name="Etgu P."/>
            <person name="Feldblyum T.V."/>
            <person name="Feng J.-D."/>
            <person name="Fong B."/>
            <person name="Fujii C.Y."/>
            <person name="Gill J.E."/>
            <person name="Goldsmith A.D."/>
            <person name="Haas B."/>
            <person name="Hansen N.F."/>
            <person name="Hughes B."/>
            <person name="Huizar L."/>
            <person name="Hunter J.L."/>
            <person name="Jenkins J."/>
            <person name="Johnson-Hopson C."/>
            <person name="Khan S."/>
            <person name="Khaykin E."/>
            <person name="Kim C.J."/>
            <person name="Koo H.L."/>
            <person name="Kremenetskaia I."/>
            <person name="Kurtz D.B."/>
            <person name="Kwan A."/>
            <person name="Lam B."/>
            <person name="Langin-Hooper S."/>
            <person name="Lee A."/>
            <person name="Lee J.M."/>
            <person name="Lenz C.A."/>
            <person name="Li J.H."/>
            <person name="Li Y.-P."/>
            <person name="Lin X."/>
            <person name="Liu S.X."/>
            <person name="Liu Z.A."/>
            <person name="Luros J.S."/>
            <person name="Maiti R."/>
            <person name="Marziali A."/>
            <person name="Militscher J."/>
            <person name="Miranda M."/>
            <person name="Nguyen M."/>
            <person name="Nierman W.C."/>
            <person name="Osborne B.I."/>
            <person name="Pai G."/>
            <person name="Peterson J."/>
            <person name="Pham P.K."/>
            <person name="Rizzo M."/>
            <person name="Rooney T."/>
            <person name="Rowley D."/>
            <person name="Sakano H."/>
            <person name="Salzberg S.L."/>
            <person name="Schwartz J.R."/>
            <person name="Shinn P."/>
            <person name="Southwick A.M."/>
            <person name="Sun H."/>
            <person name="Tallon L.J."/>
            <person name="Tambunga G."/>
            <person name="Toriumi M.J."/>
            <person name="Town C.D."/>
            <person name="Utterback T."/>
            <person name="Van Aken S."/>
            <person name="Vaysberg M."/>
            <person name="Vysotskaia V.S."/>
            <person name="Walker M."/>
            <person name="Wu D."/>
            <person name="Yu G."/>
            <person name="Fraser C.M."/>
            <person name="Venter J.C."/>
            <person name="Davis R.W."/>
        </authorList>
    </citation>
    <scope>NUCLEOTIDE SEQUENCE [LARGE SCALE GENOMIC DNA]</scope>
    <source>
        <strain>cv. Columbia</strain>
    </source>
</reference>
<reference key="2">
    <citation type="journal article" date="2017" name="Plant J.">
        <title>Araport11: a complete reannotation of the Arabidopsis thaliana reference genome.</title>
        <authorList>
            <person name="Cheng C.Y."/>
            <person name="Krishnakumar V."/>
            <person name="Chan A.P."/>
            <person name="Thibaud-Nissen F."/>
            <person name="Schobel S."/>
            <person name="Town C.D."/>
        </authorList>
    </citation>
    <scope>GENOME REANNOTATION</scope>
    <source>
        <strain>cv. Columbia</strain>
    </source>
</reference>
<reference key="3">
    <citation type="journal article" date="2003" name="Science">
        <title>Empirical analysis of transcriptional activity in the Arabidopsis genome.</title>
        <authorList>
            <person name="Yamada K."/>
            <person name="Lim J."/>
            <person name="Dale J.M."/>
            <person name="Chen H."/>
            <person name="Shinn P."/>
            <person name="Palm C.J."/>
            <person name="Southwick A.M."/>
            <person name="Wu H.C."/>
            <person name="Kim C.J."/>
            <person name="Nguyen M."/>
            <person name="Pham P.K."/>
            <person name="Cheuk R.F."/>
            <person name="Karlin-Newmann G."/>
            <person name="Liu S.X."/>
            <person name="Lam B."/>
            <person name="Sakano H."/>
            <person name="Wu T."/>
            <person name="Yu G."/>
            <person name="Miranda M."/>
            <person name="Quach H.L."/>
            <person name="Tripp M."/>
            <person name="Chang C.H."/>
            <person name="Lee J.M."/>
            <person name="Toriumi M.J."/>
            <person name="Chan M.M."/>
            <person name="Tang C.C."/>
            <person name="Onodera C.S."/>
            <person name="Deng J.M."/>
            <person name="Akiyama K."/>
            <person name="Ansari Y."/>
            <person name="Arakawa T."/>
            <person name="Banh J."/>
            <person name="Banno F."/>
            <person name="Bowser L."/>
            <person name="Brooks S.Y."/>
            <person name="Carninci P."/>
            <person name="Chao Q."/>
            <person name="Choy N."/>
            <person name="Enju A."/>
            <person name="Goldsmith A.D."/>
            <person name="Gurjal M."/>
            <person name="Hansen N.F."/>
            <person name="Hayashizaki Y."/>
            <person name="Johnson-Hopson C."/>
            <person name="Hsuan V.W."/>
            <person name="Iida K."/>
            <person name="Karnes M."/>
            <person name="Khan S."/>
            <person name="Koesema E."/>
            <person name="Ishida J."/>
            <person name="Jiang P.X."/>
            <person name="Jones T."/>
            <person name="Kawai J."/>
            <person name="Kamiya A."/>
            <person name="Meyers C."/>
            <person name="Nakajima M."/>
            <person name="Narusaka M."/>
            <person name="Seki M."/>
            <person name="Sakurai T."/>
            <person name="Satou M."/>
            <person name="Tamse R."/>
            <person name="Vaysberg M."/>
            <person name="Wallender E.K."/>
            <person name="Wong C."/>
            <person name="Yamamura Y."/>
            <person name="Yuan S."/>
            <person name="Shinozaki K."/>
            <person name="Davis R.W."/>
            <person name="Theologis A."/>
            <person name="Ecker J.R."/>
        </authorList>
    </citation>
    <scope>NUCLEOTIDE SEQUENCE [LARGE SCALE MRNA] (ISOFORM 1)</scope>
    <source>
        <strain>cv. Columbia</strain>
    </source>
</reference>
<reference key="4">
    <citation type="submission" date="2002-03" db="EMBL/GenBank/DDBJ databases">
        <title>Full-length cDNA from Arabidopsis thaliana.</title>
        <authorList>
            <person name="Brover V.V."/>
            <person name="Troukhan M.E."/>
            <person name="Alexandrov N.A."/>
            <person name="Lu Y.-P."/>
            <person name="Flavell R.B."/>
            <person name="Feldmann K.A."/>
        </authorList>
    </citation>
    <scope>NUCLEOTIDE SEQUENCE [LARGE SCALE MRNA] (ISOFORM 2)</scope>
</reference>
<reference key="5">
    <citation type="journal article" date="2002" name="Plant Cell">
        <title>A novel superfamily of transporters for allantoin and other oxo derivatives of nitrogen heterocyclic compounds in Arabidopsis.</title>
        <authorList>
            <person name="Desimone M."/>
            <person name="Catoni E."/>
            <person name="Ludewig U."/>
            <person name="Hilpert M."/>
            <person name="Schneider A."/>
            <person name="Kunze R."/>
            <person name="Tegeder M."/>
            <person name="Frommer W.B."/>
            <person name="Schumacher K."/>
        </authorList>
    </citation>
    <scope>GENE FAMILY</scope>
    <scope>NOMENCLATURE</scope>
</reference>
<reference key="6">
    <citation type="journal article" date="2006" name="Planta">
        <title>Comparative studies on Ureide Permeases in Arabidopsis thaliana and analysis of two alternative splice variants of AtUPS5.</title>
        <authorList>
            <person name="Schmidt A."/>
            <person name="Baumann N."/>
            <person name="Schwarzkopf A."/>
            <person name="Frommer W.B."/>
            <person name="Desimone M."/>
        </authorList>
    </citation>
    <scope>FUNCTION</scope>
    <scope>ALTERNATIVE SPLICING</scope>
    <scope>BIOPHYSICOCHEMICAL PROPERTIES</scope>
    <scope>TISSUE SPECIFICITY</scope>
</reference>
<sequence length="413" mass="44621">MMIAQELGIYVVESKGGAILCLLLSLLCLGTWPALMALLERRGRLPQHTYLDYSITNFLAAIFIAFVFGGIGESTHEAPSFITQLTQIQDNWPSVLFAMAGGVGLSIGNLATQYSLAFVGLSVTEVTAASITVVVGTTVNYFLDNGLNRADILFSGVGCFMVAVCLGSAVHSSNSADIKAKLGKLSGDCETVTPEECQRLFGVEEEEEEEKEMENVKEGSAAFLIALENKRAIKVLGKSMVVGLGITFFAGLSFSLFSPLFNLATNDQWHTLKQGVPKLIVYTAFFYFSLSCFVIAVALNISFLYKPVLDSPRSSFREYLSDWNGRGWALAAGLLCGFGNGLQFMGGQAAGYAASDAVQALPLVSTFWGIYLFGEYRRSSTRTYALLVGMLVMFTVAVGLLMASAGERETRFT</sequence>
<accession>Q93Z75</accession>
<accession>Q8LBT6</accession>
<accession>Q9FZC9</accession>
<evidence type="ECO:0000255" key="1"/>
<evidence type="ECO:0000269" key="2">
    <source>
    </source>
</evidence>
<evidence type="ECO:0000303" key="3">
    <source>
    </source>
</evidence>
<evidence type="ECO:0000303" key="4">
    <source>
    </source>
</evidence>
<evidence type="ECO:0000303" key="5">
    <source ref="4"/>
</evidence>
<evidence type="ECO:0000305" key="6"/>
<evidence type="ECO:0000312" key="7">
    <source>
        <dbReference type="Araport" id="AT1G26440"/>
    </source>
</evidence>
<evidence type="ECO:0000312" key="8">
    <source>
        <dbReference type="EMBL" id="AAF98583.1"/>
    </source>
</evidence>
<name>UPS5_ARATH</name>
<gene>
    <name evidence="3" type="primary">UPS5</name>
    <name evidence="7" type="ordered locus">At1g26440</name>
    <name evidence="8" type="ORF">T1K7.19</name>
</gene>
<comment type="function">
    <text evidence="2">Proton-coupled transporter that transports a wide spectrum of oxo derivatives of heterocyclic nitrogen compounds, including allantoin, uric acid and xanthine, but not adenine. Mediates transport of uracil and 5-fluorouracil (a toxic uracil analog).</text>
</comment>
<comment type="function">
    <text evidence="2">Proton-coupled transporter that transports a wide spectrum of oxo derivatives of heterocyclic nitrogen compounds, including allantoin, xanthine and uracil.</text>
</comment>
<comment type="biophysicochemical properties">
    <kinetics>
        <KM evidence="2">35 uM for allantoin</KM>
        <KM evidence="2">38 uM for uracil</KM>
        <KM evidence="2">6.8 uM for xanthine</KM>
    </kinetics>
    <phDependence>
        <text evidence="2">Optimum pH is 4.7.</text>
    </phDependence>
</comment>
<comment type="subcellular location">
    <subcellularLocation>
        <location evidence="1">Membrane</location>
        <topology evidence="1">Multi-pass membrane protein</topology>
    </subcellularLocation>
</comment>
<comment type="alternative products">
    <event type="alternative splicing"/>
    <isoform>
        <id>Q93Z75-1</id>
        <name>1</name>
        <name evidence="4">AtUPS5l</name>
        <sequence type="displayed"/>
    </isoform>
    <isoform>
        <id>Q93Z75-2</id>
        <name>2</name>
        <name evidence="4">AtUPS5s</name>
        <sequence type="described" ref="VSP_014327"/>
    </isoform>
</comment>
<comment type="tissue specificity">
    <text evidence="2">Expressed in lateral roots, rosette leaves, stems, stipules, flower stigma, pedicels and the connective tissue between pollen sacks.</text>
</comment>
<comment type="similarity">
    <text evidence="6">Belongs to the plant ureide permease (TC 2.A.7.19) family.</text>
</comment>
<comment type="sequence caution" evidence="6">
    <conflict type="erroneous initiation">
        <sequence resource="EMBL-CDS" id="AAF98583"/>
    </conflict>
    <text>Truncated N-terminus.</text>
</comment>
<organism>
    <name type="scientific">Arabidopsis thaliana</name>
    <name type="common">Mouse-ear cress</name>
    <dbReference type="NCBI Taxonomy" id="3702"/>
    <lineage>
        <taxon>Eukaryota</taxon>
        <taxon>Viridiplantae</taxon>
        <taxon>Streptophyta</taxon>
        <taxon>Embryophyta</taxon>
        <taxon>Tracheophyta</taxon>
        <taxon>Spermatophyta</taxon>
        <taxon>Magnoliopsida</taxon>
        <taxon>eudicotyledons</taxon>
        <taxon>Gunneridae</taxon>
        <taxon>Pentapetalae</taxon>
        <taxon>rosids</taxon>
        <taxon>malvids</taxon>
        <taxon>Brassicales</taxon>
        <taxon>Brassicaceae</taxon>
        <taxon>Camelineae</taxon>
        <taxon>Arabidopsis</taxon>
    </lineage>
</organism>
<keyword id="KW-0025">Alternative splicing</keyword>
<keyword id="KW-0067">ATP-binding</keyword>
<keyword id="KW-0472">Membrane</keyword>
<keyword id="KW-0547">Nucleotide-binding</keyword>
<keyword id="KW-1185">Reference proteome</keyword>
<keyword id="KW-0812">Transmembrane</keyword>
<keyword id="KW-1133">Transmembrane helix</keyword>
<keyword id="KW-0813">Transport</keyword>
<feature type="chain" id="PRO_0000221649" description="Ureide permease 5">
    <location>
        <begin position="1"/>
        <end position="413"/>
    </location>
</feature>
<feature type="topological domain" description="Extracellular" evidence="1">
    <location>
        <begin position="1"/>
        <end position="18"/>
    </location>
</feature>
<feature type="transmembrane region" description="Helical" evidence="1">
    <location>
        <begin position="19"/>
        <end position="39"/>
    </location>
</feature>
<feature type="topological domain" description="Cytoplasmic" evidence="1">
    <location>
        <begin position="40"/>
        <end position="50"/>
    </location>
</feature>
<feature type="transmembrane region" description="Helical" evidence="1">
    <location>
        <begin position="51"/>
        <end position="71"/>
    </location>
</feature>
<feature type="topological domain" description="Extracellular" evidence="1">
    <location>
        <begin position="72"/>
        <end position="91"/>
    </location>
</feature>
<feature type="transmembrane region" description="Helical" evidence="1">
    <location>
        <begin position="92"/>
        <end position="112"/>
    </location>
</feature>
<feature type="topological domain" description="Cytoplasmic" evidence="1">
    <location>
        <begin position="113"/>
        <end position="115"/>
    </location>
</feature>
<feature type="transmembrane region" description="Helical" evidence="1">
    <location>
        <begin position="116"/>
        <end position="136"/>
    </location>
</feature>
<feature type="topological domain" description="Extracellular" evidence="1">
    <location>
        <begin position="137"/>
        <end position="149"/>
    </location>
</feature>
<feature type="transmembrane region" description="Helical" evidence="1">
    <location>
        <begin position="150"/>
        <end position="170"/>
    </location>
</feature>
<feature type="topological domain" description="Cytoplasmic" evidence="1">
    <location>
        <begin position="171"/>
        <end position="240"/>
    </location>
</feature>
<feature type="transmembrane region" description="Helical" evidence="1">
    <location>
        <begin position="241"/>
        <end position="261"/>
    </location>
</feature>
<feature type="topological domain" description="Extracellular" evidence="1">
    <location>
        <begin position="262"/>
        <end position="278"/>
    </location>
</feature>
<feature type="transmembrane region" description="Helical" evidence="1">
    <location>
        <begin position="279"/>
        <end position="299"/>
    </location>
</feature>
<feature type="topological domain" description="Cytoplasmic" evidence="1">
    <location>
        <begin position="300"/>
        <end position="326"/>
    </location>
</feature>
<feature type="transmembrane region" description="Helical" evidence="1">
    <location>
        <begin position="327"/>
        <end position="347"/>
    </location>
</feature>
<feature type="topological domain" description="Extracellular" evidence="1">
    <location>
        <begin position="348"/>
        <end position="352"/>
    </location>
</feature>
<feature type="transmembrane region" description="Helical" evidence="1">
    <location>
        <begin position="353"/>
        <end position="373"/>
    </location>
</feature>
<feature type="topological domain" description="Cytoplasmic" evidence="1">
    <location>
        <begin position="374"/>
        <end position="384"/>
    </location>
</feature>
<feature type="transmembrane region" description="Helical" evidence="1">
    <location>
        <begin position="385"/>
        <end position="405"/>
    </location>
</feature>
<feature type="topological domain" description="Extracellular" evidence="1">
    <location>
        <begin position="406"/>
        <end position="413"/>
    </location>
</feature>
<feature type="binding site" evidence="1">
    <location>
        <begin position="232"/>
        <end position="239"/>
    </location>
    <ligand>
        <name>ATP</name>
        <dbReference type="ChEBI" id="CHEBI:30616"/>
    </ligand>
</feature>
<feature type="splice variant" id="VSP_014327" description="In isoform 2." evidence="5">
    <location>
        <begin position="101"/>
        <end position="135"/>
    </location>
</feature>
<feature type="sequence conflict" description="In Ref. 4; AAM64564." evidence="6" ref="4">
    <original>M</original>
    <variation>L</variation>
    <location>
        <position position="161"/>
    </location>
</feature>
<feature type="sequence conflict" description="In Ref. 4; AAM64564." evidence="6" ref="4">
    <location>
        <position position="204"/>
    </location>
</feature>
<dbReference type="EMBL" id="AC013427">
    <property type="protein sequence ID" value="AAF98583.1"/>
    <property type="status" value="ALT_INIT"/>
    <property type="molecule type" value="Genomic_DNA"/>
</dbReference>
<dbReference type="EMBL" id="CP002684">
    <property type="protein sequence ID" value="AEE30689.1"/>
    <property type="molecule type" value="Genomic_DNA"/>
</dbReference>
<dbReference type="EMBL" id="CP002684">
    <property type="protein sequence ID" value="AEE30690.1"/>
    <property type="molecule type" value="Genomic_DNA"/>
</dbReference>
<dbReference type="EMBL" id="CP002684">
    <property type="protein sequence ID" value="ANM59222.1"/>
    <property type="molecule type" value="Genomic_DNA"/>
</dbReference>
<dbReference type="EMBL" id="AY058066">
    <property type="protein sequence ID" value="AAL24174.1"/>
    <property type="molecule type" value="mRNA"/>
</dbReference>
<dbReference type="EMBL" id="BT003016">
    <property type="protein sequence ID" value="AAO23581.1"/>
    <property type="molecule type" value="mRNA"/>
</dbReference>
<dbReference type="EMBL" id="AY087003">
    <property type="protein sequence ID" value="AAM64564.1"/>
    <property type="molecule type" value="mRNA"/>
</dbReference>
<dbReference type="PIR" id="B86391">
    <property type="entry name" value="B86391"/>
</dbReference>
<dbReference type="RefSeq" id="NP_001321599.1">
    <molecule id="Q93Z75-2"/>
    <property type="nucleotide sequence ID" value="NM_001332712.1"/>
</dbReference>
<dbReference type="RefSeq" id="NP_849708.1">
    <molecule id="Q93Z75-1"/>
    <property type="nucleotide sequence ID" value="NM_179377.2"/>
</dbReference>
<dbReference type="RefSeq" id="NP_973915.1">
    <molecule id="Q93Z75-1"/>
    <property type="nucleotide sequence ID" value="NM_202186.3"/>
</dbReference>
<dbReference type="FunCoup" id="Q93Z75">
    <property type="interactions" value="7"/>
</dbReference>
<dbReference type="STRING" id="3702.Q93Z75"/>
<dbReference type="TCDB" id="2.A.7.19.3">
    <property type="family name" value="the drug/metabolite transporter (dmt) superfamily"/>
</dbReference>
<dbReference type="PaxDb" id="3702-AT1G26440.2"/>
<dbReference type="ProteomicsDB" id="243192">
    <molecule id="Q93Z75-1"/>
</dbReference>
<dbReference type="EnsemblPlants" id="AT1G26440.2">
    <molecule id="Q93Z75-1"/>
    <property type="protein sequence ID" value="AT1G26440.2"/>
    <property type="gene ID" value="AT1G26440"/>
</dbReference>
<dbReference type="EnsemblPlants" id="AT1G26440.3">
    <molecule id="Q93Z75-1"/>
    <property type="protein sequence ID" value="AT1G26440.3"/>
    <property type="gene ID" value="AT1G26440"/>
</dbReference>
<dbReference type="EnsemblPlants" id="AT1G26440.6">
    <molecule id="Q93Z75-2"/>
    <property type="protein sequence ID" value="AT1G26440.6"/>
    <property type="gene ID" value="AT1G26440"/>
</dbReference>
<dbReference type="GeneID" id="839185"/>
<dbReference type="Gramene" id="AT1G26440.2">
    <molecule id="Q93Z75-1"/>
    <property type="protein sequence ID" value="AT1G26440.2"/>
    <property type="gene ID" value="AT1G26440"/>
</dbReference>
<dbReference type="Gramene" id="AT1G26440.3">
    <molecule id="Q93Z75-1"/>
    <property type="protein sequence ID" value="AT1G26440.3"/>
    <property type="gene ID" value="AT1G26440"/>
</dbReference>
<dbReference type="Gramene" id="AT1G26440.6">
    <molecule id="Q93Z75-2"/>
    <property type="protein sequence ID" value="AT1G26440.6"/>
    <property type="gene ID" value="AT1G26440"/>
</dbReference>
<dbReference type="KEGG" id="ath:AT1G26440"/>
<dbReference type="Araport" id="AT1G26440"/>
<dbReference type="TAIR" id="AT1G26440">
    <property type="gene designation" value="UPS5"/>
</dbReference>
<dbReference type="eggNOG" id="ENOG502QUAA">
    <property type="taxonomic scope" value="Eukaryota"/>
</dbReference>
<dbReference type="HOGENOM" id="CLU_051261_0_0_1"/>
<dbReference type="InParanoid" id="Q93Z75"/>
<dbReference type="OMA" id="VSQEEYC"/>
<dbReference type="PhylomeDB" id="Q93Z75"/>
<dbReference type="SABIO-RK" id="Q93Z75"/>
<dbReference type="PRO" id="PR:Q93Z75"/>
<dbReference type="Proteomes" id="UP000006548">
    <property type="component" value="Chromosome 1"/>
</dbReference>
<dbReference type="ExpressionAtlas" id="Q93Z75">
    <property type="expression patterns" value="baseline and differential"/>
</dbReference>
<dbReference type="GO" id="GO:0009504">
    <property type="term" value="C:cell plate"/>
    <property type="evidence" value="ECO:0000314"/>
    <property type="project" value="TAIR"/>
</dbReference>
<dbReference type="GO" id="GO:0005783">
    <property type="term" value="C:endoplasmic reticulum"/>
    <property type="evidence" value="ECO:0000314"/>
    <property type="project" value="TAIR"/>
</dbReference>
<dbReference type="GO" id="GO:0005886">
    <property type="term" value="C:plasma membrane"/>
    <property type="evidence" value="ECO:0000314"/>
    <property type="project" value="TAIR"/>
</dbReference>
<dbReference type="GO" id="GO:0099503">
    <property type="term" value="C:secretory vesicle"/>
    <property type="evidence" value="ECO:0000314"/>
    <property type="project" value="TAIR"/>
</dbReference>
<dbReference type="GO" id="GO:0005802">
    <property type="term" value="C:trans-Golgi network"/>
    <property type="evidence" value="ECO:0000314"/>
    <property type="project" value="TAIR"/>
</dbReference>
<dbReference type="GO" id="GO:0005274">
    <property type="term" value="F:allantoin:proton symporter activity"/>
    <property type="evidence" value="ECO:0000314"/>
    <property type="project" value="TAIR"/>
</dbReference>
<dbReference type="GO" id="GO:0005524">
    <property type="term" value="F:ATP binding"/>
    <property type="evidence" value="ECO:0007669"/>
    <property type="project" value="UniProtKB-KW"/>
</dbReference>
<dbReference type="GO" id="GO:0140318">
    <property type="term" value="F:protein transporter activity"/>
    <property type="evidence" value="ECO:0000315"/>
    <property type="project" value="TAIR"/>
</dbReference>
<dbReference type="GO" id="GO:0015210">
    <property type="term" value="F:uracil transmembrane transporter activity"/>
    <property type="evidence" value="ECO:0000314"/>
    <property type="project" value="TAIR"/>
</dbReference>
<dbReference type="GO" id="GO:0042907">
    <property type="term" value="F:xanthine transmembrane transporter activity"/>
    <property type="evidence" value="ECO:0000314"/>
    <property type="project" value="TAIR"/>
</dbReference>
<dbReference type="GO" id="GO:0071705">
    <property type="term" value="P:nitrogen compound transport"/>
    <property type="evidence" value="ECO:0000315"/>
    <property type="project" value="TAIR"/>
</dbReference>
<dbReference type="GO" id="GO:0009651">
    <property type="term" value="P:response to salt stress"/>
    <property type="evidence" value="ECO:0000315"/>
    <property type="project" value="TAIR"/>
</dbReference>
<dbReference type="InterPro" id="IPR030189">
    <property type="entry name" value="UPS_plant"/>
</dbReference>
<dbReference type="InterPro" id="IPR009834">
    <property type="entry name" value="Ureide_permease"/>
</dbReference>
<dbReference type="PANTHER" id="PTHR31081">
    <property type="entry name" value="UREIDE PERMEASE 1-RELATED-RELATED"/>
    <property type="match status" value="1"/>
</dbReference>
<dbReference type="PANTHER" id="PTHR31081:SF16">
    <property type="entry name" value="UREIDE PERMEASE 5"/>
    <property type="match status" value="1"/>
</dbReference>
<dbReference type="Pfam" id="PF07168">
    <property type="entry name" value="Ureide_permease"/>
    <property type="match status" value="1"/>
</dbReference>
<protein>
    <recommendedName>
        <fullName evidence="3">Ureide permease 5</fullName>
        <shortName evidence="3">AtUPS5</shortName>
    </recommendedName>
</protein>
<proteinExistence type="evidence at protein level"/>